<accession>Q67TI9</accession>
<protein>
    <recommendedName>
        <fullName evidence="1">Arginine--tRNA ligase</fullName>
        <ecNumber evidence="1">6.1.1.19</ecNumber>
    </recommendedName>
    <alternativeName>
        <fullName evidence="1">Arginyl-tRNA synthetase</fullName>
        <shortName evidence="1">ArgRS</shortName>
    </alternativeName>
</protein>
<feature type="chain" id="PRO_0000242103" description="Arginine--tRNA ligase">
    <location>
        <begin position="1"/>
        <end position="558"/>
    </location>
</feature>
<feature type="short sequence motif" description="'HIGH' region">
    <location>
        <begin position="134"/>
        <end position="144"/>
    </location>
</feature>
<comment type="catalytic activity">
    <reaction evidence="1">
        <text>tRNA(Arg) + L-arginine + ATP = L-arginyl-tRNA(Arg) + AMP + diphosphate</text>
        <dbReference type="Rhea" id="RHEA:20301"/>
        <dbReference type="Rhea" id="RHEA-COMP:9658"/>
        <dbReference type="Rhea" id="RHEA-COMP:9673"/>
        <dbReference type="ChEBI" id="CHEBI:30616"/>
        <dbReference type="ChEBI" id="CHEBI:32682"/>
        <dbReference type="ChEBI" id="CHEBI:33019"/>
        <dbReference type="ChEBI" id="CHEBI:78442"/>
        <dbReference type="ChEBI" id="CHEBI:78513"/>
        <dbReference type="ChEBI" id="CHEBI:456215"/>
        <dbReference type="EC" id="6.1.1.19"/>
    </reaction>
</comment>
<comment type="subunit">
    <text evidence="1">Monomer.</text>
</comment>
<comment type="subcellular location">
    <subcellularLocation>
        <location evidence="1">Cytoplasm</location>
    </subcellularLocation>
</comment>
<comment type="similarity">
    <text evidence="1">Belongs to the class-I aminoacyl-tRNA synthetase family.</text>
</comment>
<organism>
    <name type="scientific">Symbiobacterium thermophilum (strain DSM 24528 / JCM 14929 / IAM 14863 / T)</name>
    <dbReference type="NCBI Taxonomy" id="292459"/>
    <lineage>
        <taxon>Bacteria</taxon>
        <taxon>Bacillati</taxon>
        <taxon>Bacillota</taxon>
        <taxon>Clostridia</taxon>
        <taxon>Eubacteriales</taxon>
        <taxon>Symbiobacteriaceae</taxon>
        <taxon>Symbiobacterium</taxon>
    </lineage>
</organism>
<sequence length="558" mass="63061">MRIVEQIKSEIRQALADAVSRAVAAGALVGPAPEVFLETPKAREHGDFATNLAMVMARQEKKAPRVIAQAIVDHLQTEGTWIESAEIAGPGFINLRLRQGWVHQVLPAIQAEGADYGKSDHGGKQRILLEYVSANPTGPMVLVQARAGAFGSSLARLLNWAGYECHTEFYVNDAGNQVKILARTVDLRAQELRGATVEIPEGYYPGEDVIDCARALLEQYPDFLEKPEEERLAFLERWAPEYFRSGHERVLRSYGVEFDRWFSERSLREAGAPARLVEWLKERGEAYEKDGAVWMRTTAYGDDKDRVLVKSDGEYTYFAADACYHKDKYDRGYATLIDILGQDHHGYLGRMKAMVECLGHPRDSLEILFTQMVRLFKDGQEFRMSKRRGNYVTLEDLLEQVSVDAARYFFLMRSLDTHMDFDLDLANLKSSDNPVFYVQYAHARICSILRQAREQGLEVPAASEVDTALLADESEVELMRKLAEFPEEIIGAADAREVHRIPRYLNELATLFHQFYSRCRVVSDDVPLSRARLLLVDCTRTVLANALGILGVSAPERM</sequence>
<proteinExistence type="inferred from homology"/>
<gene>
    <name evidence="1" type="primary">argS</name>
    <name type="ordered locus">STH19</name>
</gene>
<evidence type="ECO:0000255" key="1">
    <source>
        <dbReference type="HAMAP-Rule" id="MF_00123"/>
    </source>
</evidence>
<reference key="1">
    <citation type="journal article" date="2004" name="Nucleic Acids Res.">
        <title>Genome sequence of Symbiobacterium thermophilum, an uncultivable bacterium that depends on microbial commensalism.</title>
        <authorList>
            <person name="Ueda K."/>
            <person name="Yamashita A."/>
            <person name="Ishikawa J."/>
            <person name="Shimada M."/>
            <person name="Watsuji T."/>
            <person name="Morimura K."/>
            <person name="Ikeda H."/>
            <person name="Hattori M."/>
            <person name="Beppu T."/>
        </authorList>
    </citation>
    <scope>NUCLEOTIDE SEQUENCE [LARGE SCALE GENOMIC DNA]</scope>
    <source>
        <strain>DSM 24528 / JCM 14929 / IAM 14863 / T</strain>
    </source>
</reference>
<dbReference type="EC" id="6.1.1.19" evidence="1"/>
<dbReference type="EMBL" id="AP006840">
    <property type="protein sequence ID" value="BAD39004.1"/>
    <property type="molecule type" value="Genomic_DNA"/>
</dbReference>
<dbReference type="RefSeq" id="WP_011194154.1">
    <property type="nucleotide sequence ID" value="NC_006177.1"/>
</dbReference>
<dbReference type="SMR" id="Q67TI9"/>
<dbReference type="STRING" id="292459.STH19"/>
<dbReference type="KEGG" id="sth:STH19"/>
<dbReference type="eggNOG" id="COG0018">
    <property type="taxonomic scope" value="Bacteria"/>
</dbReference>
<dbReference type="HOGENOM" id="CLU_006406_0_1_9"/>
<dbReference type="OrthoDB" id="9805987at2"/>
<dbReference type="Proteomes" id="UP000000417">
    <property type="component" value="Chromosome"/>
</dbReference>
<dbReference type="GO" id="GO:0005737">
    <property type="term" value="C:cytoplasm"/>
    <property type="evidence" value="ECO:0007669"/>
    <property type="project" value="UniProtKB-SubCell"/>
</dbReference>
<dbReference type="GO" id="GO:0004814">
    <property type="term" value="F:arginine-tRNA ligase activity"/>
    <property type="evidence" value="ECO:0007669"/>
    <property type="project" value="UniProtKB-UniRule"/>
</dbReference>
<dbReference type="GO" id="GO:0005524">
    <property type="term" value="F:ATP binding"/>
    <property type="evidence" value="ECO:0007669"/>
    <property type="project" value="UniProtKB-UniRule"/>
</dbReference>
<dbReference type="GO" id="GO:0006420">
    <property type="term" value="P:arginyl-tRNA aminoacylation"/>
    <property type="evidence" value="ECO:0007669"/>
    <property type="project" value="UniProtKB-UniRule"/>
</dbReference>
<dbReference type="CDD" id="cd07956">
    <property type="entry name" value="Anticodon_Ia_Arg"/>
    <property type="match status" value="1"/>
</dbReference>
<dbReference type="CDD" id="cd00671">
    <property type="entry name" value="ArgRS_core"/>
    <property type="match status" value="1"/>
</dbReference>
<dbReference type="FunFam" id="1.10.730.10:FF:000008">
    <property type="entry name" value="Arginine--tRNA ligase"/>
    <property type="match status" value="1"/>
</dbReference>
<dbReference type="FunFam" id="3.30.1360.70:FF:000003">
    <property type="entry name" value="Arginine--tRNA ligase"/>
    <property type="match status" value="1"/>
</dbReference>
<dbReference type="FunFam" id="3.40.50.620:FF:000062">
    <property type="entry name" value="Arginine--tRNA ligase"/>
    <property type="match status" value="1"/>
</dbReference>
<dbReference type="Gene3D" id="3.30.1360.70">
    <property type="entry name" value="Arginyl tRNA synthetase N-terminal domain"/>
    <property type="match status" value="1"/>
</dbReference>
<dbReference type="Gene3D" id="3.40.50.620">
    <property type="entry name" value="HUPs"/>
    <property type="match status" value="1"/>
</dbReference>
<dbReference type="Gene3D" id="1.10.730.10">
    <property type="entry name" value="Isoleucyl-tRNA Synthetase, Domain 1"/>
    <property type="match status" value="1"/>
</dbReference>
<dbReference type="HAMAP" id="MF_00123">
    <property type="entry name" value="Arg_tRNA_synth"/>
    <property type="match status" value="1"/>
</dbReference>
<dbReference type="InterPro" id="IPR001278">
    <property type="entry name" value="Arg-tRNA-ligase"/>
</dbReference>
<dbReference type="InterPro" id="IPR005148">
    <property type="entry name" value="Arg-tRNA-synth_N"/>
</dbReference>
<dbReference type="InterPro" id="IPR036695">
    <property type="entry name" value="Arg-tRNA-synth_N_sf"/>
</dbReference>
<dbReference type="InterPro" id="IPR035684">
    <property type="entry name" value="ArgRS_core"/>
</dbReference>
<dbReference type="InterPro" id="IPR008909">
    <property type="entry name" value="DALR_anticod-bd"/>
</dbReference>
<dbReference type="InterPro" id="IPR014729">
    <property type="entry name" value="Rossmann-like_a/b/a_fold"/>
</dbReference>
<dbReference type="InterPro" id="IPR009080">
    <property type="entry name" value="tRNAsynth_Ia_anticodon-bd"/>
</dbReference>
<dbReference type="NCBIfam" id="TIGR00456">
    <property type="entry name" value="argS"/>
    <property type="match status" value="1"/>
</dbReference>
<dbReference type="PANTHER" id="PTHR11956:SF5">
    <property type="entry name" value="ARGININE--TRNA LIGASE, CYTOPLASMIC"/>
    <property type="match status" value="1"/>
</dbReference>
<dbReference type="PANTHER" id="PTHR11956">
    <property type="entry name" value="ARGINYL-TRNA SYNTHETASE"/>
    <property type="match status" value="1"/>
</dbReference>
<dbReference type="Pfam" id="PF03485">
    <property type="entry name" value="Arg_tRNA_synt_N"/>
    <property type="match status" value="1"/>
</dbReference>
<dbReference type="Pfam" id="PF05746">
    <property type="entry name" value="DALR_1"/>
    <property type="match status" value="1"/>
</dbReference>
<dbReference type="Pfam" id="PF00750">
    <property type="entry name" value="tRNA-synt_1d"/>
    <property type="match status" value="1"/>
</dbReference>
<dbReference type="PRINTS" id="PR01038">
    <property type="entry name" value="TRNASYNTHARG"/>
</dbReference>
<dbReference type="SMART" id="SM01016">
    <property type="entry name" value="Arg_tRNA_synt_N"/>
    <property type="match status" value="1"/>
</dbReference>
<dbReference type="SMART" id="SM00836">
    <property type="entry name" value="DALR_1"/>
    <property type="match status" value="1"/>
</dbReference>
<dbReference type="SUPFAM" id="SSF47323">
    <property type="entry name" value="Anticodon-binding domain of a subclass of class I aminoacyl-tRNA synthetases"/>
    <property type="match status" value="1"/>
</dbReference>
<dbReference type="SUPFAM" id="SSF55190">
    <property type="entry name" value="Arginyl-tRNA synthetase (ArgRS), N-terminal 'additional' domain"/>
    <property type="match status" value="1"/>
</dbReference>
<dbReference type="SUPFAM" id="SSF52374">
    <property type="entry name" value="Nucleotidylyl transferase"/>
    <property type="match status" value="1"/>
</dbReference>
<keyword id="KW-0030">Aminoacyl-tRNA synthetase</keyword>
<keyword id="KW-0067">ATP-binding</keyword>
<keyword id="KW-0963">Cytoplasm</keyword>
<keyword id="KW-0436">Ligase</keyword>
<keyword id="KW-0547">Nucleotide-binding</keyword>
<keyword id="KW-0648">Protein biosynthesis</keyword>
<keyword id="KW-1185">Reference proteome</keyword>
<name>SYR_SYMTH</name>